<organism>
    <name type="scientific">Campylobacter jejuni subsp. jejuni serotype O:6 (strain 81116 / NCTC 11828)</name>
    <dbReference type="NCBI Taxonomy" id="407148"/>
    <lineage>
        <taxon>Bacteria</taxon>
        <taxon>Pseudomonadati</taxon>
        <taxon>Campylobacterota</taxon>
        <taxon>Epsilonproteobacteria</taxon>
        <taxon>Campylobacterales</taxon>
        <taxon>Campylobacteraceae</taxon>
        <taxon>Campylobacter</taxon>
    </lineage>
</organism>
<keyword id="KW-0456">Lyase</keyword>
<keyword id="KW-0501">Molybdenum cofactor biosynthesis</keyword>
<reference key="1">
    <citation type="journal article" date="2007" name="J. Bacteriol.">
        <title>The complete genome sequence of Campylobacter jejuni strain 81116 (NCTC11828).</title>
        <authorList>
            <person name="Pearson B.M."/>
            <person name="Gaskin D.J.H."/>
            <person name="Segers R.P.A.M."/>
            <person name="Wells J.M."/>
            <person name="Nuijten P.J.M."/>
            <person name="van Vliet A.H.M."/>
        </authorList>
    </citation>
    <scope>NUCLEOTIDE SEQUENCE [LARGE SCALE GENOMIC DNA]</scope>
    <source>
        <strain>81116 / NCTC 11828</strain>
    </source>
</reference>
<gene>
    <name evidence="1" type="primary">moaC</name>
    <name type="ordered locus">C8J_0229</name>
</gene>
<comment type="function">
    <text evidence="1">Catalyzes the conversion of (8S)-3',8-cyclo-7,8-dihydroguanosine 5'-triphosphate to cyclic pyranopterin monophosphate (cPMP).</text>
</comment>
<comment type="catalytic activity">
    <reaction evidence="1">
        <text>(8S)-3',8-cyclo-7,8-dihydroguanosine 5'-triphosphate = cyclic pyranopterin phosphate + diphosphate</text>
        <dbReference type="Rhea" id="RHEA:49580"/>
        <dbReference type="ChEBI" id="CHEBI:33019"/>
        <dbReference type="ChEBI" id="CHEBI:59648"/>
        <dbReference type="ChEBI" id="CHEBI:131766"/>
        <dbReference type="EC" id="4.6.1.17"/>
    </reaction>
</comment>
<comment type="pathway">
    <text evidence="1">Cofactor biosynthesis; molybdopterin biosynthesis.</text>
</comment>
<comment type="subunit">
    <text evidence="1">Homohexamer; trimer of dimers.</text>
</comment>
<comment type="similarity">
    <text evidence="1">Belongs to the MoaC family.</text>
</comment>
<name>MOAC_CAMJ8</name>
<sequence>MKLSHLDEKNHPKMVDVSDKNITSRIATASGMIYMSQEAFDVIKNNTAKKGPVLQTAIIAAIMGAKKTSEIIPMCHPLMLSKVETDIMEFVKECAFKLIVTVKCEGKTGVEMEALSGVSIGLLTIYDMIKAIDKSMRITDILLESKEGGKSGKFVRS</sequence>
<accession>A8FK41</accession>
<feature type="chain" id="PRO_1000073157" description="Cyclic pyranopterin monophosphate synthase">
    <location>
        <begin position="1"/>
        <end position="157"/>
    </location>
</feature>
<feature type="active site" evidence="1">
    <location>
        <position position="127"/>
    </location>
</feature>
<feature type="binding site" evidence="1">
    <location>
        <begin position="74"/>
        <end position="76"/>
    </location>
    <ligand>
        <name>substrate</name>
    </ligand>
</feature>
<feature type="binding site" evidence="1">
    <location>
        <begin position="112"/>
        <end position="113"/>
    </location>
    <ligand>
        <name>substrate</name>
    </ligand>
</feature>
<dbReference type="EC" id="4.6.1.17" evidence="1"/>
<dbReference type="EMBL" id="CP000814">
    <property type="protein sequence ID" value="ABV51828.1"/>
    <property type="molecule type" value="Genomic_DNA"/>
</dbReference>
<dbReference type="RefSeq" id="WP_002878143.1">
    <property type="nucleotide sequence ID" value="NC_009839.1"/>
</dbReference>
<dbReference type="SMR" id="A8FK41"/>
<dbReference type="KEGG" id="cju:C8J_0229"/>
<dbReference type="HOGENOM" id="CLU_074693_1_1_7"/>
<dbReference type="UniPathway" id="UPA00344"/>
<dbReference type="GO" id="GO:0061799">
    <property type="term" value="F:cyclic pyranopterin monophosphate synthase activity"/>
    <property type="evidence" value="ECO:0007669"/>
    <property type="project" value="UniProtKB-UniRule"/>
</dbReference>
<dbReference type="GO" id="GO:0006777">
    <property type="term" value="P:Mo-molybdopterin cofactor biosynthetic process"/>
    <property type="evidence" value="ECO:0007669"/>
    <property type="project" value="UniProtKB-UniRule"/>
</dbReference>
<dbReference type="CDD" id="cd01420">
    <property type="entry name" value="MoaC_PE"/>
    <property type="match status" value="1"/>
</dbReference>
<dbReference type="Gene3D" id="3.30.70.640">
    <property type="entry name" value="Molybdopterin cofactor biosynthesis C (MoaC) domain"/>
    <property type="match status" value="1"/>
</dbReference>
<dbReference type="HAMAP" id="MF_01224_B">
    <property type="entry name" value="MoaC_B"/>
    <property type="match status" value="1"/>
</dbReference>
<dbReference type="InterPro" id="IPR023045">
    <property type="entry name" value="MoaC"/>
</dbReference>
<dbReference type="InterPro" id="IPR047594">
    <property type="entry name" value="MoaC_bact/euk"/>
</dbReference>
<dbReference type="InterPro" id="IPR036522">
    <property type="entry name" value="MoaC_sf"/>
</dbReference>
<dbReference type="InterPro" id="IPR050105">
    <property type="entry name" value="MoCo_biosynth_MoaA/MoaC"/>
</dbReference>
<dbReference type="InterPro" id="IPR002820">
    <property type="entry name" value="Mopterin_CF_biosynth-C_dom"/>
</dbReference>
<dbReference type="NCBIfam" id="TIGR00581">
    <property type="entry name" value="moaC"/>
    <property type="match status" value="1"/>
</dbReference>
<dbReference type="NCBIfam" id="NF006870">
    <property type="entry name" value="PRK09364.1"/>
    <property type="match status" value="1"/>
</dbReference>
<dbReference type="PANTHER" id="PTHR22960">
    <property type="entry name" value="MOLYBDOPTERIN COFACTOR SYNTHESIS PROTEIN A"/>
    <property type="match status" value="1"/>
</dbReference>
<dbReference type="Pfam" id="PF01967">
    <property type="entry name" value="MoaC"/>
    <property type="match status" value="1"/>
</dbReference>
<dbReference type="SUPFAM" id="SSF55040">
    <property type="entry name" value="Molybdenum cofactor biosynthesis protein C, MoaC"/>
    <property type="match status" value="1"/>
</dbReference>
<proteinExistence type="inferred from homology"/>
<evidence type="ECO:0000255" key="1">
    <source>
        <dbReference type="HAMAP-Rule" id="MF_01224"/>
    </source>
</evidence>
<protein>
    <recommendedName>
        <fullName evidence="1">Cyclic pyranopterin monophosphate synthase</fullName>
        <ecNumber evidence="1">4.6.1.17</ecNumber>
    </recommendedName>
    <alternativeName>
        <fullName evidence="1">Molybdenum cofactor biosynthesis protein C</fullName>
    </alternativeName>
</protein>